<dbReference type="EMBL" id="AL050300">
    <property type="protein sequence ID" value="CAB43411.1"/>
    <property type="molecule type" value="Genomic_DNA"/>
</dbReference>
<dbReference type="EMBL" id="AL353912">
    <property type="status" value="NOT_ANNOTATED_CDS"/>
    <property type="molecule type" value="Genomic_DNA"/>
</dbReference>
<dbReference type="EMBL" id="CP002686">
    <property type="protein sequence ID" value="AEE78959.1"/>
    <property type="molecule type" value="Genomic_DNA"/>
</dbReference>
<dbReference type="EMBL" id="CP002686">
    <property type="protein sequence ID" value="AEE78960.1"/>
    <property type="molecule type" value="Genomic_DNA"/>
</dbReference>
<dbReference type="EMBL" id="CP002686">
    <property type="protein sequence ID" value="AEE78961.1"/>
    <property type="molecule type" value="Genomic_DNA"/>
</dbReference>
<dbReference type="EMBL" id="AY042846">
    <property type="protein sequence ID" value="AAK68786.1"/>
    <property type="molecule type" value="mRNA"/>
</dbReference>
<dbReference type="EMBL" id="AY072492">
    <property type="protein sequence ID" value="AAL66907.1"/>
    <property type="molecule type" value="mRNA"/>
</dbReference>
<dbReference type="EMBL" id="AY085609">
    <property type="protein sequence ID" value="AAM62830.1"/>
    <property type="molecule type" value="mRNA"/>
</dbReference>
<dbReference type="PIR" id="T08443">
    <property type="entry name" value="T08443"/>
</dbReference>
<dbReference type="RefSeq" id="NP_001078272.1">
    <molecule id="Q9SVD7-3"/>
    <property type="nucleotide sequence ID" value="NM_001084803.1"/>
</dbReference>
<dbReference type="RefSeq" id="NP_566968.1">
    <molecule id="Q9SVD7-1"/>
    <property type="nucleotide sequence ID" value="NM_115116.4"/>
</dbReference>
<dbReference type="RefSeq" id="NP_850684.1">
    <molecule id="Q9SVD7-2"/>
    <property type="nucleotide sequence ID" value="NM_180353.2"/>
</dbReference>
<dbReference type="SMR" id="Q9SVD7"/>
<dbReference type="BioGRID" id="9740">
    <property type="interactions" value="11"/>
</dbReference>
<dbReference type="FunCoup" id="Q9SVD7">
    <property type="interactions" value="4601"/>
</dbReference>
<dbReference type="IntAct" id="Q9SVD7">
    <property type="interactions" value="8"/>
</dbReference>
<dbReference type="STRING" id="3702.Q9SVD7"/>
<dbReference type="iPTMnet" id="Q9SVD7"/>
<dbReference type="EnsemblPlants" id="AT3G52560.1">
    <molecule id="Q9SVD7-1"/>
    <property type="protein sequence ID" value="AT3G52560.1"/>
    <property type="gene ID" value="AT3G52560"/>
</dbReference>
<dbReference type="EnsemblPlants" id="AT3G52560.2">
    <molecule id="Q9SVD7-2"/>
    <property type="protein sequence ID" value="AT3G52560.2"/>
    <property type="gene ID" value="AT3G52560"/>
</dbReference>
<dbReference type="EnsemblPlants" id="AT3G52560.3">
    <molecule id="Q9SVD7-3"/>
    <property type="protein sequence ID" value="AT3G52560.3"/>
    <property type="gene ID" value="AT3G52560"/>
</dbReference>
<dbReference type="GeneID" id="824422"/>
<dbReference type="Gramene" id="AT3G52560.1">
    <molecule id="Q9SVD7-1"/>
    <property type="protein sequence ID" value="AT3G52560.1"/>
    <property type="gene ID" value="AT3G52560"/>
</dbReference>
<dbReference type="Gramene" id="AT3G52560.2">
    <molecule id="Q9SVD7-2"/>
    <property type="protein sequence ID" value="AT3G52560.2"/>
    <property type="gene ID" value="AT3G52560"/>
</dbReference>
<dbReference type="Gramene" id="AT3G52560.3">
    <molecule id="Q9SVD7-3"/>
    <property type="protein sequence ID" value="AT3G52560.3"/>
    <property type="gene ID" value="AT3G52560"/>
</dbReference>
<dbReference type="KEGG" id="ath:AT3G52560"/>
<dbReference type="Araport" id="AT3G52560"/>
<dbReference type="TAIR" id="AT3G52560">
    <property type="gene designation" value="UEV1D-4"/>
</dbReference>
<dbReference type="HOGENOM" id="CLU_063065_4_0_1"/>
<dbReference type="InParanoid" id="Q9SVD7"/>
<dbReference type="OrthoDB" id="6508832at2759"/>
<dbReference type="PhylomeDB" id="Q9SVD7"/>
<dbReference type="CD-CODE" id="4299E36E">
    <property type="entry name" value="Nucleolus"/>
</dbReference>
<dbReference type="PRO" id="PR:Q9SVD7"/>
<dbReference type="Proteomes" id="UP000006548">
    <property type="component" value="Chromosome 3"/>
</dbReference>
<dbReference type="ExpressionAtlas" id="Q9SVD7">
    <property type="expression patterns" value="baseline and differential"/>
</dbReference>
<dbReference type="CDD" id="cd23807">
    <property type="entry name" value="UEV_UBE2V"/>
    <property type="match status" value="1"/>
</dbReference>
<dbReference type="FunFam" id="3.10.110.10:FF:000019">
    <property type="entry name" value="Ubiquitin-conjugating enzyme E2 variant 1C"/>
    <property type="match status" value="1"/>
</dbReference>
<dbReference type="Gene3D" id="3.10.110.10">
    <property type="entry name" value="Ubiquitin Conjugating Enzyme"/>
    <property type="match status" value="1"/>
</dbReference>
<dbReference type="InterPro" id="IPR000608">
    <property type="entry name" value="UBQ-conjugat_E2_core"/>
</dbReference>
<dbReference type="InterPro" id="IPR016135">
    <property type="entry name" value="UBQ-conjugating_enzyme/RWD"/>
</dbReference>
<dbReference type="PANTHER" id="PTHR24068">
    <property type="entry name" value="UBIQUITIN-CONJUGATING ENZYME E2"/>
    <property type="match status" value="1"/>
</dbReference>
<dbReference type="Pfam" id="PF00179">
    <property type="entry name" value="UQ_con"/>
    <property type="match status" value="1"/>
</dbReference>
<dbReference type="SMART" id="SM00212">
    <property type="entry name" value="UBCc"/>
    <property type="match status" value="1"/>
</dbReference>
<dbReference type="SUPFAM" id="SSF54495">
    <property type="entry name" value="UBC-like"/>
    <property type="match status" value="1"/>
</dbReference>
<dbReference type="PROSITE" id="PS50127">
    <property type="entry name" value="UBC_2"/>
    <property type="match status" value="1"/>
</dbReference>
<reference key="1">
    <citation type="journal article" date="2000" name="Nature">
        <title>Sequence and analysis of chromosome 3 of the plant Arabidopsis thaliana.</title>
        <authorList>
            <person name="Salanoubat M."/>
            <person name="Lemcke K."/>
            <person name="Rieger M."/>
            <person name="Ansorge W."/>
            <person name="Unseld M."/>
            <person name="Fartmann B."/>
            <person name="Valle G."/>
            <person name="Bloecker H."/>
            <person name="Perez-Alonso M."/>
            <person name="Obermaier B."/>
            <person name="Delseny M."/>
            <person name="Boutry M."/>
            <person name="Grivell L.A."/>
            <person name="Mache R."/>
            <person name="Puigdomenech P."/>
            <person name="De Simone V."/>
            <person name="Choisne N."/>
            <person name="Artiguenave F."/>
            <person name="Robert C."/>
            <person name="Brottier P."/>
            <person name="Wincker P."/>
            <person name="Cattolico L."/>
            <person name="Weissenbach J."/>
            <person name="Saurin W."/>
            <person name="Quetier F."/>
            <person name="Schaefer M."/>
            <person name="Mueller-Auer S."/>
            <person name="Gabel C."/>
            <person name="Fuchs M."/>
            <person name="Benes V."/>
            <person name="Wurmbach E."/>
            <person name="Drzonek H."/>
            <person name="Erfle H."/>
            <person name="Jordan N."/>
            <person name="Bangert S."/>
            <person name="Wiedelmann R."/>
            <person name="Kranz H."/>
            <person name="Voss H."/>
            <person name="Holland R."/>
            <person name="Brandt P."/>
            <person name="Nyakatura G."/>
            <person name="Vezzi A."/>
            <person name="D'Angelo M."/>
            <person name="Pallavicini A."/>
            <person name="Toppo S."/>
            <person name="Simionati B."/>
            <person name="Conrad A."/>
            <person name="Hornischer K."/>
            <person name="Kauer G."/>
            <person name="Loehnert T.-H."/>
            <person name="Nordsiek G."/>
            <person name="Reichelt J."/>
            <person name="Scharfe M."/>
            <person name="Schoen O."/>
            <person name="Bargues M."/>
            <person name="Terol J."/>
            <person name="Climent J."/>
            <person name="Navarro P."/>
            <person name="Collado C."/>
            <person name="Perez-Perez A."/>
            <person name="Ottenwaelder B."/>
            <person name="Duchemin D."/>
            <person name="Cooke R."/>
            <person name="Laudie M."/>
            <person name="Berger-Llauro C."/>
            <person name="Purnelle B."/>
            <person name="Masuy D."/>
            <person name="de Haan M."/>
            <person name="Maarse A.C."/>
            <person name="Alcaraz J.-P."/>
            <person name="Cottet A."/>
            <person name="Casacuberta E."/>
            <person name="Monfort A."/>
            <person name="Argiriou A."/>
            <person name="Flores M."/>
            <person name="Liguori R."/>
            <person name="Vitale D."/>
            <person name="Mannhaupt G."/>
            <person name="Haase D."/>
            <person name="Schoof H."/>
            <person name="Rudd S."/>
            <person name="Zaccaria P."/>
            <person name="Mewes H.-W."/>
            <person name="Mayer K.F.X."/>
            <person name="Kaul S."/>
            <person name="Town C.D."/>
            <person name="Koo H.L."/>
            <person name="Tallon L.J."/>
            <person name="Jenkins J."/>
            <person name="Rooney T."/>
            <person name="Rizzo M."/>
            <person name="Walts A."/>
            <person name="Utterback T."/>
            <person name="Fujii C.Y."/>
            <person name="Shea T.P."/>
            <person name="Creasy T.H."/>
            <person name="Haas B."/>
            <person name="Maiti R."/>
            <person name="Wu D."/>
            <person name="Peterson J."/>
            <person name="Van Aken S."/>
            <person name="Pai G."/>
            <person name="Militscher J."/>
            <person name="Sellers P."/>
            <person name="Gill J.E."/>
            <person name="Feldblyum T.V."/>
            <person name="Preuss D."/>
            <person name="Lin X."/>
            <person name="Nierman W.C."/>
            <person name="Salzberg S.L."/>
            <person name="White O."/>
            <person name="Venter J.C."/>
            <person name="Fraser C.M."/>
            <person name="Kaneko T."/>
            <person name="Nakamura Y."/>
            <person name="Sato S."/>
            <person name="Kato T."/>
            <person name="Asamizu E."/>
            <person name="Sasamoto S."/>
            <person name="Kimura T."/>
            <person name="Idesawa K."/>
            <person name="Kawashima K."/>
            <person name="Kishida Y."/>
            <person name="Kiyokawa C."/>
            <person name="Kohara M."/>
            <person name="Matsumoto M."/>
            <person name="Matsuno A."/>
            <person name="Muraki A."/>
            <person name="Nakayama S."/>
            <person name="Nakazaki N."/>
            <person name="Shinpo S."/>
            <person name="Takeuchi C."/>
            <person name="Wada T."/>
            <person name="Watanabe A."/>
            <person name="Yamada M."/>
            <person name="Yasuda M."/>
            <person name="Tabata S."/>
        </authorList>
    </citation>
    <scope>NUCLEOTIDE SEQUENCE [LARGE SCALE GENOMIC DNA]</scope>
    <source>
        <strain>cv. Columbia</strain>
    </source>
</reference>
<reference key="2">
    <citation type="journal article" date="2017" name="Plant J.">
        <title>Araport11: a complete reannotation of the Arabidopsis thaliana reference genome.</title>
        <authorList>
            <person name="Cheng C.Y."/>
            <person name="Krishnakumar V."/>
            <person name="Chan A.P."/>
            <person name="Thibaud-Nissen F."/>
            <person name="Schobel S."/>
            <person name="Town C.D."/>
        </authorList>
    </citation>
    <scope>GENOME REANNOTATION</scope>
    <source>
        <strain>cv. Columbia</strain>
    </source>
</reference>
<reference key="3">
    <citation type="journal article" date="2003" name="Science">
        <title>Empirical analysis of transcriptional activity in the Arabidopsis genome.</title>
        <authorList>
            <person name="Yamada K."/>
            <person name="Lim J."/>
            <person name="Dale J.M."/>
            <person name="Chen H."/>
            <person name="Shinn P."/>
            <person name="Palm C.J."/>
            <person name="Southwick A.M."/>
            <person name="Wu H.C."/>
            <person name="Kim C.J."/>
            <person name="Nguyen M."/>
            <person name="Pham P.K."/>
            <person name="Cheuk R.F."/>
            <person name="Karlin-Newmann G."/>
            <person name="Liu S.X."/>
            <person name="Lam B."/>
            <person name="Sakano H."/>
            <person name="Wu T."/>
            <person name="Yu G."/>
            <person name="Miranda M."/>
            <person name="Quach H.L."/>
            <person name="Tripp M."/>
            <person name="Chang C.H."/>
            <person name="Lee J.M."/>
            <person name="Toriumi M.J."/>
            <person name="Chan M.M."/>
            <person name="Tang C.C."/>
            <person name="Onodera C.S."/>
            <person name="Deng J.M."/>
            <person name="Akiyama K."/>
            <person name="Ansari Y."/>
            <person name="Arakawa T."/>
            <person name="Banh J."/>
            <person name="Banno F."/>
            <person name="Bowser L."/>
            <person name="Brooks S.Y."/>
            <person name="Carninci P."/>
            <person name="Chao Q."/>
            <person name="Choy N."/>
            <person name="Enju A."/>
            <person name="Goldsmith A.D."/>
            <person name="Gurjal M."/>
            <person name="Hansen N.F."/>
            <person name="Hayashizaki Y."/>
            <person name="Johnson-Hopson C."/>
            <person name="Hsuan V.W."/>
            <person name="Iida K."/>
            <person name="Karnes M."/>
            <person name="Khan S."/>
            <person name="Koesema E."/>
            <person name="Ishida J."/>
            <person name="Jiang P.X."/>
            <person name="Jones T."/>
            <person name="Kawai J."/>
            <person name="Kamiya A."/>
            <person name="Meyers C."/>
            <person name="Nakajima M."/>
            <person name="Narusaka M."/>
            <person name="Seki M."/>
            <person name="Sakurai T."/>
            <person name="Satou M."/>
            <person name="Tamse R."/>
            <person name="Vaysberg M."/>
            <person name="Wallender E.K."/>
            <person name="Wong C."/>
            <person name="Yamamura Y."/>
            <person name="Yuan S."/>
            <person name="Shinozaki K."/>
            <person name="Davis R.W."/>
            <person name="Theologis A."/>
            <person name="Ecker J.R."/>
        </authorList>
    </citation>
    <scope>NUCLEOTIDE SEQUENCE [LARGE SCALE MRNA] (ISOFORM 1)</scope>
    <source>
        <strain>cv. Columbia</strain>
    </source>
</reference>
<reference key="4">
    <citation type="submission" date="2002-03" db="EMBL/GenBank/DDBJ databases">
        <title>Full-length cDNA from Arabidopsis thaliana.</title>
        <authorList>
            <person name="Brover V.V."/>
            <person name="Troukhan M.E."/>
            <person name="Alexandrov N.A."/>
            <person name="Lu Y.-P."/>
            <person name="Flavell R.B."/>
            <person name="Feldmann K.A."/>
        </authorList>
    </citation>
    <scope>NUCLEOTIDE SEQUENCE [LARGE SCALE MRNA] (ISOFORM 1)</scope>
</reference>
<reference key="5">
    <citation type="journal article" date="2007" name="Plant Cell">
        <title>Ubiquitin lysine 63 chain forming ligases regulate apical dominance in Arabidopsis.</title>
        <authorList>
            <person name="Yin X.-J."/>
            <person name="Volk S."/>
            <person name="Ljung K."/>
            <person name="Mehlmer N."/>
            <person name="Dolezal K."/>
            <person name="Ditengou F."/>
            <person name="Hanano S."/>
            <person name="Davis S.J."/>
            <person name="Schmelzer E."/>
            <person name="Sandberg G."/>
            <person name="Teige M."/>
            <person name="Palme K."/>
            <person name="Pickart C."/>
            <person name="Bachmair A."/>
        </authorList>
    </citation>
    <scope>IDENTIFICATION</scope>
    <scope>FUNCTION</scope>
    <scope>SUBUNIT</scope>
</reference>
<reference key="6">
    <citation type="journal article" date="2008" name="Plant Cell">
        <title>Arabidopsis UEV1D promotes lysine-63-linked polyubiquitination and is involved in DNA damage response.</title>
        <authorList>
            <person name="Wen R."/>
            <person name="Torres-Acosta J.A."/>
            <person name="Pastushok L."/>
            <person name="Lai X."/>
            <person name="Pelzer L."/>
            <person name="Wang H."/>
            <person name="Xiao W."/>
        </authorList>
    </citation>
    <scope>FUNCTION</scope>
    <scope>DISRUPTION PHENOTYPE</scope>
    <scope>ALTERNATIVE SPLICING</scope>
    <scope>TISSUE SPECIFICITY</scope>
    <scope>DEVELOPMENTAL STAGE</scope>
    <scope>INDUCTION</scope>
    <scope>INTERACTION WITH UBC35 AND UBC 36</scope>
</reference>
<reference key="7">
    <citation type="journal article" date="2009" name="Plant Physiol.">
        <title>Large-scale Arabidopsis phosphoproteome profiling reveals novel chloroplast kinase substrates and phosphorylation networks.</title>
        <authorList>
            <person name="Reiland S."/>
            <person name="Messerli G."/>
            <person name="Baerenfaller K."/>
            <person name="Gerrits B."/>
            <person name="Endler A."/>
            <person name="Grossmann J."/>
            <person name="Gruissem W."/>
            <person name="Baginsky S."/>
        </authorList>
    </citation>
    <scope>IDENTIFICATION BY MASS SPECTROMETRY [LARGE SCALE ANALYSIS]</scope>
</reference>
<proteinExistence type="evidence at protein level"/>
<organism>
    <name type="scientific">Arabidopsis thaliana</name>
    <name type="common">Mouse-ear cress</name>
    <dbReference type="NCBI Taxonomy" id="3702"/>
    <lineage>
        <taxon>Eukaryota</taxon>
        <taxon>Viridiplantae</taxon>
        <taxon>Streptophyta</taxon>
        <taxon>Embryophyta</taxon>
        <taxon>Tracheophyta</taxon>
        <taxon>Spermatophyta</taxon>
        <taxon>Magnoliopsida</taxon>
        <taxon>eudicotyledons</taxon>
        <taxon>Gunneridae</taxon>
        <taxon>Pentapetalae</taxon>
        <taxon>rosids</taxon>
        <taxon>malvids</taxon>
        <taxon>Brassicales</taxon>
        <taxon>Brassicaceae</taxon>
        <taxon>Camelineae</taxon>
        <taxon>Arabidopsis</taxon>
    </lineage>
</organism>
<accession>Q9SVD7</accession>
<accession>A8MSC0</accession>
<accession>Q3EAL0</accession>
<name>UEV1D_ARATH</name>
<gene>
    <name type="primary">UEV1D</name>
    <name type="synonym">MMZ4</name>
    <name type="ordered locus">At3g52560</name>
    <name type="ORF">F22O6.60</name>
</gene>
<sequence length="146" mass="16533">MTLGSGGSSVVVPRNFRLLEELERGEKGIGDGTVSYGMDDGDDIYMRSWTGTIIGPHNTVHEGRIYQLKLFCDKDYPEKPPTVRFHSRVNMACVNHETGVVDPKKFGLLANWQREYTMEDILVQLKKEMSTSHNRKLVQPPEGTCF</sequence>
<feature type="chain" id="PRO_0000344629" description="Ubiquitin-conjugating enzyme E2 variant 1D">
    <location>
        <begin position="1"/>
        <end position="146"/>
    </location>
</feature>
<feature type="domain" description="UBC core" evidence="1">
    <location>
        <begin position="13"/>
        <end position="146"/>
    </location>
</feature>
<feature type="splice variant" id="VSP_034854" description="In isoform 3." evidence="4">
    <location>
        <begin position="1"/>
        <end position="37"/>
    </location>
</feature>
<feature type="splice variant" id="VSP_034855" description="In isoform 2 and isoform 3." evidence="4">
    <original>N</original>
    <variation>NV</variation>
    <location>
        <position position="58"/>
    </location>
</feature>
<comment type="function">
    <text evidence="2 3">Has no ubiquitin ligase activity on its own. The heterodimer with UBC catalyzes the synthesis of non-canonical poly-ubiquitin chains that are linked through 'Lys-63'. This type of poly-ubiquitination does not lead to protein degradation by the proteasome. Mediates transcriptional activation of target genes. May play a role in the control of progress through the cell cycle and differentiation. Involved in the error-free DNA repair pathway and contributes to the survival of cells after DNA damage.</text>
</comment>
<comment type="subunit">
    <text evidence="2">Heterodimer with UBC35 or UBC36.</text>
</comment>
<comment type="interaction">
    <interactant intactId="EBI-3386882">
        <id>Q9SVD7</id>
    </interactant>
    <interactant intactId="EBI-4465263">
        <id>Q93ZF6</id>
        <label>AIRP1</label>
    </interactant>
    <organismsDiffer>false</organismsDiffer>
    <experiments>3</experiments>
</comment>
<comment type="alternative products">
    <event type="alternative splicing"/>
    <isoform>
        <id>Q9SVD7-1</id>
        <name>1</name>
        <sequence type="displayed"/>
    </isoform>
    <isoform>
        <id>Q9SVD7-2</id>
        <name>2</name>
        <sequence type="described" ref="VSP_034855"/>
    </isoform>
    <isoform>
        <id>Q9SVD7-3</id>
        <name>3</name>
        <sequence type="described" ref="VSP_034854 VSP_034855"/>
    </isoform>
</comment>
<comment type="tissue specificity">
    <text evidence="3">Expressed in roots, shoots, leaves, stems, flowers and pollen.</text>
</comment>
<comment type="developmental stage">
    <text evidence="3">Detected in seedlings 6 hours and 2 days post-germination.</text>
</comment>
<comment type="induction">
    <text evidence="3">Not induced by stresses.</text>
</comment>
<comment type="disruption phenotype">
    <text evidence="3">Plants do not display apparent morphological variations, but are sensitive to the DNA-damaging agent MMS.</text>
</comment>
<comment type="miscellaneous">
    <molecule>Isoform 2</molecule>
    <text evidence="4">May be due to a competing donor splice site.</text>
</comment>
<comment type="miscellaneous">
    <molecule>Isoform 3</molecule>
    <text evidence="4">May be due to a competing donor splice site.</text>
</comment>
<comment type="similarity">
    <text evidence="1">Belongs to the ubiquitin-conjugating enzyme family.</text>
</comment>
<protein>
    <recommendedName>
        <fullName>Ubiquitin-conjugating enzyme E2 variant 1D</fullName>
        <shortName>Ubc enzyme variant 1D</shortName>
    </recommendedName>
    <alternativeName>
        <fullName>Protein MMS ZWEI HOMOLOG 4</fullName>
    </alternativeName>
</protein>
<evidence type="ECO:0000255" key="1">
    <source>
        <dbReference type="PROSITE-ProRule" id="PRU00388"/>
    </source>
</evidence>
<evidence type="ECO:0000269" key="2">
    <source>
    </source>
</evidence>
<evidence type="ECO:0000269" key="3">
    <source>
    </source>
</evidence>
<evidence type="ECO:0000305" key="4"/>
<keyword id="KW-0025">Alternative splicing</keyword>
<keyword id="KW-1185">Reference proteome</keyword>